<dbReference type="EC" id="2.7.11.22" evidence="14"/>
<dbReference type="EC" id="2.7.11.23" evidence="20"/>
<dbReference type="EMBL" id="M38724">
    <property type="protein sequence ID" value="AAA37408.1"/>
    <property type="molecule type" value="mRNA"/>
</dbReference>
<dbReference type="EMBL" id="X16461">
    <property type="protein sequence ID" value="CAA34481.1"/>
    <property type="molecule type" value="mRNA"/>
</dbReference>
<dbReference type="EMBL" id="U58633">
    <property type="protein sequence ID" value="AAB09465.1"/>
    <property type="molecule type" value="mRNA"/>
</dbReference>
<dbReference type="EMBL" id="AK030231">
    <property type="protein sequence ID" value="BAC26856.1"/>
    <property type="molecule type" value="mRNA"/>
</dbReference>
<dbReference type="EMBL" id="AK135516">
    <property type="protein sequence ID" value="BAE22561.1"/>
    <property type="molecule type" value="mRNA"/>
</dbReference>
<dbReference type="EMBL" id="AK168054">
    <property type="protein sequence ID" value="BAE40034.1"/>
    <property type="molecule type" value="mRNA"/>
</dbReference>
<dbReference type="EMBL" id="BC024396">
    <property type="protein sequence ID" value="AAH24396.1"/>
    <property type="molecule type" value="mRNA"/>
</dbReference>
<dbReference type="CCDS" id="CCDS23908.1"/>
<dbReference type="PIR" id="A36074">
    <property type="entry name" value="A36074"/>
</dbReference>
<dbReference type="RefSeq" id="NP_031685.2">
    <property type="nucleotide sequence ID" value="NM_007659.3"/>
</dbReference>
<dbReference type="SMR" id="P11440"/>
<dbReference type="BioGRID" id="198624">
    <property type="interactions" value="145"/>
</dbReference>
<dbReference type="ComplexPortal" id="CPX-2061">
    <property type="entry name" value="Cyclin A1-CDK1 complex"/>
</dbReference>
<dbReference type="ComplexPortal" id="CPX-2062">
    <property type="entry name" value="Cyclin A2-CDK1 complex"/>
</dbReference>
<dbReference type="ComplexPortal" id="CPX-2069">
    <property type="entry name" value="Cyclin B1-CDK1 complex"/>
</dbReference>
<dbReference type="ComplexPortal" id="CPX-2070">
    <property type="entry name" value="Cyclin B2-CDK1 complex"/>
</dbReference>
<dbReference type="CORUM" id="P11440"/>
<dbReference type="DIP" id="DIP-38725N"/>
<dbReference type="ELM" id="P11440"/>
<dbReference type="FunCoup" id="P11440">
    <property type="interactions" value="2222"/>
</dbReference>
<dbReference type="IntAct" id="P11440">
    <property type="interactions" value="133"/>
</dbReference>
<dbReference type="MINT" id="P11440"/>
<dbReference type="STRING" id="10090.ENSMUSP00000020099"/>
<dbReference type="BindingDB" id="P11440"/>
<dbReference type="ChEMBL" id="CHEMBL4084"/>
<dbReference type="iPTMnet" id="P11440"/>
<dbReference type="PhosphoSitePlus" id="P11440"/>
<dbReference type="SwissPalm" id="P11440"/>
<dbReference type="jPOST" id="P11440"/>
<dbReference type="PaxDb" id="10090-ENSMUSP00000020099"/>
<dbReference type="PeptideAtlas" id="P11440"/>
<dbReference type="ProteomicsDB" id="283771"/>
<dbReference type="Pumba" id="P11440"/>
<dbReference type="Antibodypedia" id="1134">
    <property type="antibodies" value="2696 antibodies from 49 providers"/>
</dbReference>
<dbReference type="DNASU" id="12534"/>
<dbReference type="Ensembl" id="ENSMUST00000020099.13">
    <property type="protein sequence ID" value="ENSMUSP00000020099.6"/>
    <property type="gene ID" value="ENSMUSG00000019942.14"/>
</dbReference>
<dbReference type="Ensembl" id="ENSMUST00000119827.8">
    <property type="protein sequence ID" value="ENSMUSP00000113184.2"/>
    <property type="gene ID" value="ENSMUSG00000019942.14"/>
</dbReference>
<dbReference type="GeneID" id="12534"/>
<dbReference type="KEGG" id="mmu:12534"/>
<dbReference type="UCSC" id="uc007fmr.1">
    <property type="organism name" value="mouse"/>
</dbReference>
<dbReference type="AGR" id="MGI:88351"/>
<dbReference type="CTD" id="983"/>
<dbReference type="MGI" id="MGI:88351">
    <property type="gene designation" value="Cdk1"/>
</dbReference>
<dbReference type="VEuPathDB" id="HostDB:ENSMUSG00000019942"/>
<dbReference type="eggNOG" id="KOG0594">
    <property type="taxonomic scope" value="Eukaryota"/>
</dbReference>
<dbReference type="GeneTree" id="ENSGT00940000153335"/>
<dbReference type="InParanoid" id="P11440"/>
<dbReference type="OMA" id="YLYQITR"/>
<dbReference type="OrthoDB" id="1732493at2759"/>
<dbReference type="PhylomeDB" id="P11440"/>
<dbReference type="TreeFam" id="TF101021"/>
<dbReference type="BRENDA" id="2.7.11.22">
    <property type="organism ID" value="3474"/>
</dbReference>
<dbReference type="Reactome" id="R-MMU-110056">
    <property type="pathway name" value="MAPK3 (ERK1) activation"/>
</dbReference>
<dbReference type="Reactome" id="R-MMU-174048">
    <property type="pathway name" value="APC/C:Cdc20 mediated degradation of Cyclin B"/>
</dbReference>
<dbReference type="Reactome" id="R-MMU-174184">
    <property type="pathway name" value="Cdc20:Phospho-APC/C mediated degradation of Cyclin A"/>
</dbReference>
<dbReference type="Reactome" id="R-MMU-176408">
    <property type="pathway name" value="Regulation of APC/C activators between G1/S and early anaphase"/>
</dbReference>
<dbReference type="Reactome" id="R-MMU-176412">
    <property type="pathway name" value="Phosphorylation of the APC/C"/>
</dbReference>
<dbReference type="Reactome" id="R-MMU-176417">
    <property type="pathway name" value="Phosphorylation of Emi1"/>
</dbReference>
<dbReference type="Reactome" id="R-MMU-2299718">
    <property type="pathway name" value="Condensation of Prophase Chromosomes"/>
</dbReference>
<dbReference type="Reactome" id="R-MMU-2500257">
    <property type="pathway name" value="Resolution of Sister Chromatid Cohesion"/>
</dbReference>
<dbReference type="Reactome" id="R-MMU-2565942">
    <property type="pathway name" value="Regulation of PLK1 Activity at G2/M Transition"/>
</dbReference>
<dbReference type="Reactome" id="R-MMU-2980767">
    <property type="pathway name" value="Activation of NIMA Kinases NEK9, NEK6, NEK7"/>
</dbReference>
<dbReference type="Reactome" id="R-MMU-2995383">
    <property type="pathway name" value="Initiation of Nuclear Envelope (NE) Reformation"/>
</dbReference>
<dbReference type="Reactome" id="R-MMU-3301854">
    <property type="pathway name" value="Nuclear Pore Complex (NPC) Disassembly"/>
</dbReference>
<dbReference type="Reactome" id="R-MMU-380259">
    <property type="pathway name" value="Loss of Nlp from mitotic centrosomes"/>
</dbReference>
<dbReference type="Reactome" id="R-MMU-380270">
    <property type="pathway name" value="Recruitment of mitotic centrosome proteins and complexes"/>
</dbReference>
<dbReference type="Reactome" id="R-MMU-380284">
    <property type="pathway name" value="Loss of proteins required for interphase microtubule organization from the centrosome"/>
</dbReference>
<dbReference type="Reactome" id="R-MMU-380320">
    <property type="pathway name" value="Recruitment of NuMA to mitotic centrosomes"/>
</dbReference>
<dbReference type="Reactome" id="R-MMU-4419969">
    <property type="pathway name" value="Depolymerization of the Nuclear Lamina"/>
</dbReference>
<dbReference type="Reactome" id="R-MMU-5620912">
    <property type="pathway name" value="Anchoring of the basal body to the plasma membrane"/>
</dbReference>
<dbReference type="Reactome" id="R-MMU-5687128">
    <property type="pathway name" value="MAPK6/MAPK4 signaling"/>
</dbReference>
<dbReference type="Reactome" id="R-MMU-5689896">
    <property type="pathway name" value="Ovarian tumor domain proteases"/>
</dbReference>
<dbReference type="Reactome" id="R-MMU-6804114">
    <property type="pathway name" value="TP53 Regulates Transcription of Genes Involved in G2 Cell Cycle Arrest"/>
</dbReference>
<dbReference type="Reactome" id="R-MMU-6804757">
    <property type="pathway name" value="Regulation of TP53 Degradation"/>
</dbReference>
<dbReference type="Reactome" id="R-MMU-68875">
    <property type="pathway name" value="Mitotic Prophase"/>
</dbReference>
<dbReference type="Reactome" id="R-MMU-69273">
    <property type="pathway name" value="Cyclin A/B1/B2 associated events during G2/M transition"/>
</dbReference>
<dbReference type="Reactome" id="R-MMU-69478">
    <property type="pathway name" value="G2/M DNA replication checkpoint"/>
</dbReference>
<dbReference type="Reactome" id="R-MMU-75035">
    <property type="pathway name" value="Chk1/Chk2(Cds1) mediated inactivation of Cyclin B:Cdk1 complex"/>
</dbReference>
<dbReference type="Reactome" id="R-MMU-8852276">
    <property type="pathway name" value="The role of GTSE1 in G2/M progression after G2 checkpoint"/>
</dbReference>
<dbReference type="Reactome" id="R-MMU-8854518">
    <property type="pathway name" value="AURKA Activation by TPX2"/>
</dbReference>
<dbReference type="Reactome" id="R-MMU-8878166">
    <property type="pathway name" value="Transcriptional regulation by RUNX2"/>
</dbReference>
<dbReference type="Reactome" id="R-MMU-9833482">
    <property type="pathway name" value="PKR-mediated signaling"/>
</dbReference>
<dbReference type="BioGRID-ORCS" id="12534">
    <property type="hits" value="29 hits in 78 CRISPR screens"/>
</dbReference>
<dbReference type="ChiTaRS" id="Cdk1">
    <property type="organism name" value="mouse"/>
</dbReference>
<dbReference type="PRO" id="PR:P11440"/>
<dbReference type="Proteomes" id="UP000000589">
    <property type="component" value="Chromosome 10"/>
</dbReference>
<dbReference type="RNAct" id="P11440">
    <property type="molecule type" value="protein"/>
</dbReference>
<dbReference type="Bgee" id="ENSMUSG00000019942">
    <property type="expression patterns" value="Expressed in maxillary prominence and 229 other cell types or tissues"/>
</dbReference>
<dbReference type="ExpressionAtlas" id="P11440">
    <property type="expression patterns" value="baseline and differential"/>
</dbReference>
<dbReference type="GO" id="GO:0005813">
    <property type="term" value="C:centrosome"/>
    <property type="evidence" value="ECO:0000250"/>
    <property type="project" value="UniProtKB"/>
</dbReference>
<dbReference type="GO" id="GO:0097122">
    <property type="term" value="C:cyclin A2-CDK1 complex"/>
    <property type="evidence" value="ECO:0000353"/>
    <property type="project" value="ComplexPortal"/>
</dbReference>
<dbReference type="GO" id="GO:0097125">
    <property type="term" value="C:cyclin B1-CDK1 complex"/>
    <property type="evidence" value="ECO:0007669"/>
    <property type="project" value="Ensembl"/>
</dbReference>
<dbReference type="GO" id="GO:0030496">
    <property type="term" value="C:midbody"/>
    <property type="evidence" value="ECO:0007669"/>
    <property type="project" value="Ensembl"/>
</dbReference>
<dbReference type="GO" id="GO:0005759">
    <property type="term" value="C:mitochondrial matrix"/>
    <property type="evidence" value="ECO:0007669"/>
    <property type="project" value="Ensembl"/>
</dbReference>
<dbReference type="GO" id="GO:0072686">
    <property type="term" value="C:mitotic spindle"/>
    <property type="evidence" value="ECO:0000250"/>
    <property type="project" value="UniProtKB"/>
</dbReference>
<dbReference type="GO" id="GO:0005654">
    <property type="term" value="C:nucleoplasm"/>
    <property type="evidence" value="ECO:0000304"/>
    <property type="project" value="Reactome"/>
</dbReference>
<dbReference type="GO" id="GO:0005634">
    <property type="term" value="C:nucleus"/>
    <property type="evidence" value="ECO:0000266"/>
    <property type="project" value="MGI"/>
</dbReference>
<dbReference type="GO" id="GO:0005876">
    <property type="term" value="C:spindle microtubule"/>
    <property type="evidence" value="ECO:0007669"/>
    <property type="project" value="Ensembl"/>
</dbReference>
<dbReference type="GO" id="GO:0005524">
    <property type="term" value="F:ATP binding"/>
    <property type="evidence" value="ECO:0007669"/>
    <property type="project" value="UniProtKB-KW"/>
</dbReference>
<dbReference type="GO" id="GO:0003682">
    <property type="term" value="F:chromatin binding"/>
    <property type="evidence" value="ECO:0000314"/>
    <property type="project" value="MGI"/>
</dbReference>
<dbReference type="GO" id="GO:0030332">
    <property type="term" value="F:cyclin binding"/>
    <property type="evidence" value="ECO:0000266"/>
    <property type="project" value="MGI"/>
</dbReference>
<dbReference type="GO" id="GO:0097472">
    <property type="term" value="F:cyclin-dependent protein kinase activity"/>
    <property type="evidence" value="ECO:0000314"/>
    <property type="project" value="MGI"/>
</dbReference>
<dbReference type="GO" id="GO:0004693">
    <property type="term" value="F:cyclin-dependent protein serine/threonine kinase activity"/>
    <property type="evidence" value="ECO:0000314"/>
    <property type="project" value="UniProtKB"/>
</dbReference>
<dbReference type="GO" id="GO:0035173">
    <property type="term" value="F:histone kinase activity"/>
    <property type="evidence" value="ECO:0007669"/>
    <property type="project" value="Ensembl"/>
</dbReference>
<dbReference type="GO" id="GO:0030544">
    <property type="term" value="F:Hsp70 protein binding"/>
    <property type="evidence" value="ECO:0000353"/>
    <property type="project" value="MGI"/>
</dbReference>
<dbReference type="GO" id="GO:0016301">
    <property type="term" value="F:kinase activity"/>
    <property type="evidence" value="ECO:0000314"/>
    <property type="project" value="MGI"/>
</dbReference>
<dbReference type="GO" id="GO:0004672">
    <property type="term" value="F:protein kinase activity"/>
    <property type="evidence" value="ECO:0000266"/>
    <property type="project" value="MGI"/>
</dbReference>
<dbReference type="GO" id="GO:0106310">
    <property type="term" value="F:protein serine kinase activity"/>
    <property type="evidence" value="ECO:0007669"/>
    <property type="project" value="RHEA"/>
</dbReference>
<dbReference type="GO" id="GO:0004674">
    <property type="term" value="F:protein serine/threonine kinase activity"/>
    <property type="evidence" value="ECO:0000314"/>
    <property type="project" value="UniProtKB"/>
</dbReference>
<dbReference type="GO" id="GO:0008353">
    <property type="term" value="F:RNA polymerase II CTD heptapeptide repeat kinase activity"/>
    <property type="evidence" value="ECO:0007669"/>
    <property type="project" value="UniProtKB-EC"/>
</dbReference>
<dbReference type="GO" id="GO:0006915">
    <property type="term" value="P:apoptotic process"/>
    <property type="evidence" value="ECO:0007669"/>
    <property type="project" value="UniProtKB-KW"/>
</dbReference>
<dbReference type="GO" id="GO:0051301">
    <property type="term" value="P:cell division"/>
    <property type="evidence" value="ECO:0007669"/>
    <property type="project" value="UniProtKB-KW"/>
</dbReference>
<dbReference type="GO" id="GO:0070301">
    <property type="term" value="P:cellular response to hydrogen peroxide"/>
    <property type="evidence" value="ECO:0007669"/>
    <property type="project" value="Ensembl"/>
</dbReference>
<dbReference type="GO" id="GO:0030261">
    <property type="term" value="P:chromosome condensation"/>
    <property type="evidence" value="ECO:0007669"/>
    <property type="project" value="Ensembl"/>
</dbReference>
<dbReference type="GO" id="GO:0030855">
    <property type="term" value="P:epithelial cell differentiation"/>
    <property type="evidence" value="ECO:0007669"/>
    <property type="project" value="Ensembl"/>
</dbReference>
<dbReference type="GO" id="GO:0048144">
    <property type="term" value="P:fibroblast proliferation"/>
    <property type="evidence" value="ECO:0000314"/>
    <property type="project" value="MGI"/>
</dbReference>
<dbReference type="GO" id="GO:0000082">
    <property type="term" value="P:G1/S transition of mitotic cell cycle"/>
    <property type="evidence" value="ECO:0000303"/>
    <property type="project" value="ComplexPortal"/>
</dbReference>
<dbReference type="GO" id="GO:0000086">
    <property type="term" value="P:G2/M transition of mitotic cell cycle"/>
    <property type="evidence" value="ECO:0000250"/>
    <property type="project" value="UniProtKB"/>
</dbReference>
<dbReference type="GO" id="GO:0090166">
    <property type="term" value="P:Golgi disassembly"/>
    <property type="evidence" value="ECO:0000250"/>
    <property type="project" value="UniProtKB"/>
</dbReference>
<dbReference type="GO" id="GO:1902850">
    <property type="term" value="P:microtubule cytoskeleton organization involved in mitosis"/>
    <property type="evidence" value="ECO:0007669"/>
    <property type="project" value="Ensembl"/>
</dbReference>
<dbReference type="GO" id="GO:0044772">
    <property type="term" value="P:mitotic cell cycle phase transition"/>
    <property type="evidence" value="ECO:0000315"/>
    <property type="project" value="MGI"/>
</dbReference>
<dbReference type="GO" id="GO:0007095">
    <property type="term" value="P:mitotic G2 DNA damage checkpoint signaling"/>
    <property type="evidence" value="ECO:0000314"/>
    <property type="project" value="MGI"/>
</dbReference>
<dbReference type="GO" id="GO:0007077">
    <property type="term" value="P:mitotic nuclear membrane disassembly"/>
    <property type="evidence" value="ECO:0007669"/>
    <property type="project" value="Ensembl"/>
</dbReference>
<dbReference type="GO" id="GO:0043066">
    <property type="term" value="P:negative regulation of apoptotic process"/>
    <property type="evidence" value="ECO:0007669"/>
    <property type="project" value="Ensembl"/>
</dbReference>
<dbReference type="GO" id="GO:0010629">
    <property type="term" value="P:negative regulation of gene expression"/>
    <property type="evidence" value="ECO:0007669"/>
    <property type="project" value="Ensembl"/>
</dbReference>
<dbReference type="GO" id="GO:0018105">
    <property type="term" value="P:peptidyl-serine phosphorylation"/>
    <property type="evidence" value="ECO:0000250"/>
    <property type="project" value="UniProtKB"/>
</dbReference>
<dbReference type="GO" id="GO:0018107">
    <property type="term" value="P:peptidyl-threonine phosphorylation"/>
    <property type="evidence" value="ECO:0000250"/>
    <property type="project" value="ParkinsonsUK-UCL"/>
</dbReference>
<dbReference type="GO" id="GO:0060045">
    <property type="term" value="P:positive regulation of cardiac muscle cell proliferation"/>
    <property type="evidence" value="ECO:0007669"/>
    <property type="project" value="Ensembl"/>
</dbReference>
<dbReference type="GO" id="GO:0045740">
    <property type="term" value="P:positive regulation of DNA replication"/>
    <property type="evidence" value="ECO:0007669"/>
    <property type="project" value="Ensembl"/>
</dbReference>
<dbReference type="GO" id="GO:0010971">
    <property type="term" value="P:positive regulation of G2/M transition of mitotic cell cycle"/>
    <property type="evidence" value="ECO:0007669"/>
    <property type="project" value="Ensembl"/>
</dbReference>
<dbReference type="GO" id="GO:0010628">
    <property type="term" value="P:positive regulation of gene expression"/>
    <property type="evidence" value="ECO:0007669"/>
    <property type="project" value="Ensembl"/>
</dbReference>
<dbReference type="GO" id="GO:1905448">
    <property type="term" value="P:positive regulation of mitochondrial ATP synthesis coupled electron transport"/>
    <property type="evidence" value="ECO:0007669"/>
    <property type="project" value="Ensembl"/>
</dbReference>
<dbReference type="GO" id="GO:0062033">
    <property type="term" value="P:positive regulation of mitotic sister chromatid segregation"/>
    <property type="evidence" value="ECO:0007669"/>
    <property type="project" value="Ensembl"/>
</dbReference>
<dbReference type="GO" id="GO:0042307">
    <property type="term" value="P:positive regulation of protein import into nucleus"/>
    <property type="evidence" value="ECO:0007669"/>
    <property type="project" value="Ensembl"/>
</dbReference>
<dbReference type="GO" id="GO:0034501">
    <property type="term" value="P:protein localization to kinetochore"/>
    <property type="evidence" value="ECO:0000250"/>
    <property type="project" value="UniProtKB"/>
</dbReference>
<dbReference type="GO" id="GO:0065003">
    <property type="term" value="P:protein-containing complex assembly"/>
    <property type="evidence" value="ECO:0007669"/>
    <property type="project" value="Ensembl"/>
</dbReference>
<dbReference type="GO" id="GO:1902423">
    <property type="term" value="P:regulation of attachment of mitotic spindle microtubules to kinetochore"/>
    <property type="evidence" value="ECO:0000250"/>
    <property type="project" value="UniProtKB"/>
</dbReference>
<dbReference type="GO" id="GO:0042752">
    <property type="term" value="P:regulation of circadian rhythm"/>
    <property type="evidence" value="ECO:0000250"/>
    <property type="project" value="UniProtKB"/>
</dbReference>
<dbReference type="GO" id="GO:0014823">
    <property type="term" value="P:response to activity"/>
    <property type="evidence" value="ECO:0007669"/>
    <property type="project" value="Ensembl"/>
</dbReference>
<dbReference type="GO" id="GO:0014075">
    <property type="term" value="P:response to amine"/>
    <property type="evidence" value="ECO:0007669"/>
    <property type="project" value="Ensembl"/>
</dbReference>
<dbReference type="GO" id="GO:0048678">
    <property type="term" value="P:response to axon injury"/>
    <property type="evidence" value="ECO:0007669"/>
    <property type="project" value="Ensembl"/>
</dbReference>
<dbReference type="GO" id="GO:0046686">
    <property type="term" value="P:response to cadmium ion"/>
    <property type="evidence" value="ECO:0007669"/>
    <property type="project" value="Ensembl"/>
</dbReference>
<dbReference type="GO" id="GO:0046688">
    <property type="term" value="P:response to copper ion"/>
    <property type="evidence" value="ECO:0007669"/>
    <property type="project" value="Ensembl"/>
</dbReference>
<dbReference type="GO" id="GO:0045471">
    <property type="term" value="P:response to ethanol"/>
    <property type="evidence" value="ECO:0007669"/>
    <property type="project" value="Ensembl"/>
</dbReference>
<dbReference type="GO" id="GO:0009636">
    <property type="term" value="P:response to toxic substance"/>
    <property type="evidence" value="ECO:0007669"/>
    <property type="project" value="Ensembl"/>
</dbReference>
<dbReference type="GO" id="GO:0009410">
    <property type="term" value="P:response to xenobiotic stimulus"/>
    <property type="evidence" value="ECO:0007669"/>
    <property type="project" value="Ensembl"/>
</dbReference>
<dbReference type="GO" id="GO:0048511">
    <property type="term" value="P:rhythmic process"/>
    <property type="evidence" value="ECO:0007669"/>
    <property type="project" value="UniProtKB-KW"/>
</dbReference>
<dbReference type="GO" id="GO:0055015">
    <property type="term" value="P:ventricular cardiac muscle cell development"/>
    <property type="evidence" value="ECO:0007669"/>
    <property type="project" value="Ensembl"/>
</dbReference>
<dbReference type="CDD" id="cd07861">
    <property type="entry name" value="STKc_CDK1_euk"/>
    <property type="match status" value="1"/>
</dbReference>
<dbReference type="FunFam" id="1.10.510.10:FF:000231">
    <property type="entry name" value="Cyclin-dependent kinase 1"/>
    <property type="match status" value="1"/>
</dbReference>
<dbReference type="FunFam" id="3.30.200.20:FF:000027">
    <property type="entry name" value="Putative Cyclin-dependent kinase 1"/>
    <property type="match status" value="1"/>
</dbReference>
<dbReference type="Gene3D" id="3.30.200.20">
    <property type="entry name" value="Phosphorylase Kinase, domain 1"/>
    <property type="match status" value="1"/>
</dbReference>
<dbReference type="Gene3D" id="1.10.510.10">
    <property type="entry name" value="Transferase(Phosphotransferase) domain 1"/>
    <property type="match status" value="1"/>
</dbReference>
<dbReference type="InterPro" id="IPR050108">
    <property type="entry name" value="CDK"/>
</dbReference>
<dbReference type="InterPro" id="IPR011009">
    <property type="entry name" value="Kinase-like_dom_sf"/>
</dbReference>
<dbReference type="InterPro" id="IPR000719">
    <property type="entry name" value="Prot_kinase_dom"/>
</dbReference>
<dbReference type="InterPro" id="IPR017441">
    <property type="entry name" value="Protein_kinase_ATP_BS"/>
</dbReference>
<dbReference type="InterPro" id="IPR008271">
    <property type="entry name" value="Ser/Thr_kinase_AS"/>
</dbReference>
<dbReference type="PANTHER" id="PTHR24056">
    <property type="entry name" value="CELL DIVISION PROTEIN KINASE"/>
    <property type="match status" value="1"/>
</dbReference>
<dbReference type="PANTHER" id="PTHR24056:SF334">
    <property type="entry name" value="CYCLIN-DEPENDENT KINASE 1"/>
    <property type="match status" value="1"/>
</dbReference>
<dbReference type="Pfam" id="PF00069">
    <property type="entry name" value="Pkinase"/>
    <property type="match status" value="1"/>
</dbReference>
<dbReference type="SMART" id="SM00220">
    <property type="entry name" value="S_TKc"/>
    <property type="match status" value="1"/>
</dbReference>
<dbReference type="SUPFAM" id="SSF56112">
    <property type="entry name" value="Protein kinase-like (PK-like)"/>
    <property type="match status" value="1"/>
</dbReference>
<dbReference type="PROSITE" id="PS00107">
    <property type="entry name" value="PROTEIN_KINASE_ATP"/>
    <property type="match status" value="1"/>
</dbReference>
<dbReference type="PROSITE" id="PS50011">
    <property type="entry name" value="PROTEIN_KINASE_DOM"/>
    <property type="match status" value="1"/>
</dbReference>
<dbReference type="PROSITE" id="PS00108">
    <property type="entry name" value="PROTEIN_KINASE_ST"/>
    <property type="match status" value="1"/>
</dbReference>
<accession>P11440</accession>
<accession>P70337</accession>
<accession>Q3TI12</accession>
<feature type="chain" id="PRO_0000085725" description="Cyclin-dependent kinase 1">
    <location>
        <begin position="1"/>
        <end position="297"/>
    </location>
</feature>
<feature type="domain" description="Protein kinase" evidence="3">
    <location>
        <begin position="4"/>
        <end position="287"/>
    </location>
</feature>
<feature type="active site" description="Proton acceptor" evidence="3 4">
    <location>
        <position position="128"/>
    </location>
</feature>
<feature type="binding site" evidence="3">
    <location>
        <begin position="10"/>
        <end position="18"/>
    </location>
    <ligand>
        <name>ATP</name>
        <dbReference type="ChEBI" id="CHEBI:30616"/>
    </ligand>
</feature>
<feature type="binding site" evidence="3">
    <location>
        <position position="33"/>
    </location>
    <ligand>
        <name>ATP</name>
        <dbReference type="ChEBI" id="CHEBI:30616"/>
    </ligand>
</feature>
<feature type="modified residue" description="N-acetylmethionine" evidence="23">
    <location>
        <position position="1"/>
    </location>
</feature>
<feature type="modified residue" description="Phosphotyrosine; by PKR" evidence="1">
    <location>
        <position position="4"/>
    </location>
</feature>
<feature type="modified residue" description="N6-acetyllysine; alternate" evidence="23">
    <location>
        <position position="6"/>
    </location>
</feature>
<feature type="modified residue" description="N6-acetyllysine; alternate" evidence="23">
    <location>
        <position position="9"/>
    </location>
</feature>
<feature type="modified residue" description="Phosphothreonine" evidence="21 22">
    <location>
        <position position="14"/>
    </location>
</feature>
<feature type="modified residue" description="Phosphotyrosine; by PKMYT1, WEE1, WEE2 and PKC/PRKCD" evidence="17 18 19 21 22">
    <location>
        <position position="15"/>
    </location>
</feature>
<feature type="modified residue" description="Phosphotyrosine; by WEE1 and WEE2" evidence="6 9 10 21 22">
    <location>
        <position position="15"/>
    </location>
</feature>
<feature type="modified residue" description="Phosphotyrosine" evidence="1">
    <location>
        <position position="19"/>
    </location>
</feature>
<feature type="modified residue" description="Phosphoserine" evidence="1">
    <location>
        <position position="39"/>
    </location>
</feature>
<feature type="modified residue" description="Phosphotyrosine" evidence="1">
    <location>
        <position position="77"/>
    </location>
</feature>
<feature type="modified residue" description="Phosphothreonine" evidence="1">
    <location>
        <position position="141"/>
    </location>
</feature>
<feature type="modified residue" description="Phosphothreonine; by CAK" evidence="1">
    <location>
        <position position="161"/>
    </location>
</feature>
<feature type="modified residue" description="Phosphoserine" evidence="1">
    <location>
        <position position="178"/>
    </location>
</feature>
<feature type="modified residue" description="Phosphothreonine" evidence="1">
    <location>
        <position position="222"/>
    </location>
</feature>
<feature type="modified residue" description="N6-succinyllysine" evidence="23">
    <location>
        <position position="245"/>
    </location>
</feature>
<feature type="modified residue" description="Phosphoserine" evidence="1">
    <location>
        <position position="248"/>
    </location>
</feature>
<feature type="cross-link" description="Glycyl lysine isopeptide (Lys-Gly) (interchain with G-Cter in SUMO2); alternate" evidence="1">
    <location>
        <position position="6"/>
    </location>
</feature>
<feature type="cross-link" description="Glycyl lysine isopeptide (Lys-Gly) (interchain with G-Cter in SUMO2); alternate" evidence="1">
    <location>
        <position position="9"/>
    </location>
</feature>
<feature type="cross-link" description="Glycyl lysine isopeptide (Lys-Gly) (interchain with G-Cter in SUMO2)" evidence="1">
    <location>
        <position position="20"/>
    </location>
</feature>
<feature type="cross-link" description="Glycyl lysine isopeptide (Lys-Gly) (interchain with G-Cter in SUMO2)" evidence="1">
    <location>
        <position position="139"/>
    </location>
</feature>
<feature type="sequence conflict" description="In Ref. 4; AAB09465." evidence="16" ref="4">
    <original>I</original>
    <variation>M</variation>
    <location>
        <position position="112"/>
    </location>
</feature>
<feature type="sequence conflict" description="In Ref. 3; AA sequence." evidence="16" ref="3">
    <original>L</original>
    <variation>M</variation>
    <location>
        <position position="113"/>
    </location>
</feature>
<feature type="sequence conflict" description="In Ref. 2; CAA34481." evidence="16" ref="2">
    <original>V</original>
    <variation>L</variation>
    <location>
        <position position="165"/>
    </location>
</feature>
<feature type="sequence conflict" description="In Ref. 3; AA sequence and 4; AAB09465." evidence="16" ref="3 4">
    <original>K</original>
    <variation>N</variation>
    <location>
        <position position="245"/>
    </location>
</feature>
<feature type="sequence conflict" description="In Ref. 3; AA sequence and 4; AAB09465." evidence="16" ref="3 4">
    <original>G</original>
    <variation>C</variation>
    <location>
        <position position="260"/>
    </location>
</feature>
<feature type="sequence conflict" description="In Ref. 3; AA sequence and 4; AAB09465." evidence="16" ref="3 4">
    <original>L</original>
    <variation>F</variation>
    <location>
        <position position="263"/>
    </location>
</feature>
<feature type="sequence conflict" description="In Ref. 2; CAA34481." evidence="16" ref="2">
    <original>A</original>
    <variation>T</variation>
    <location>
        <position position="273"/>
    </location>
</feature>
<reference key="1">
    <citation type="journal article" date="1990" name="Cell">
        <title>The FT210 cell line is a mouse G2 phase mutant with a temperature-sensitive CDC2 gene product.</title>
        <authorList>
            <person name="Th'Ng J.P.H."/>
            <person name="Wright P.S."/>
            <person name="Hamaguchi J."/>
            <person name="Lee M.G."/>
            <person name="Norbury C.J."/>
            <person name="Nurse P."/>
            <person name="Bradbury E.M."/>
        </authorList>
    </citation>
    <scope>NUCLEOTIDE SEQUENCE [MRNA]</scope>
    <source>
        <strain>FM3A</strain>
        <tissue>Mammary carcinoma</tissue>
    </source>
</reference>
<reference key="2">
    <citation type="journal article" date="1990" name="DNA Seq.">
        <title>Cloning of the mouse homologue of the yeast cell cycle control gene cdc2.</title>
        <authorList>
            <person name="Spurr N.K."/>
            <person name="Gough A.C."/>
            <person name="Lee M.G."/>
        </authorList>
    </citation>
    <scope>NUCLEOTIDE SEQUENCE [MRNA]</scope>
    <source>
        <strain>BALB/cJ</strain>
    </source>
</reference>
<reference key="3">
    <citation type="journal article" date="1989" name="Nature">
        <title>Phosphorylation of RNA polymerase by the murine homologue of the cell-cycle control protein cdc2.</title>
        <authorList>
            <person name="Cisek L.J."/>
            <person name="Corden J.L."/>
        </authorList>
    </citation>
    <scope>NUCLEOTIDE SEQUENCE [MRNA]</scope>
    <scope>PARTIAL PROTEIN SEQUENCE</scope>
    <scope>FUNCTION</scope>
    <scope>CATALYTIC ACTIVITY</scope>
</reference>
<reference key="4">
    <citation type="journal article" date="1998" name="Mol. Cells">
        <title>Characterization of the murine cdc2 gene.</title>
        <authorList>
            <person name="Jun D."/>
            <person name="Park H.K."/>
            <person name="Nordin A.A."/>
            <person name="Nagel J.E."/>
            <person name="Kim Y.H."/>
        </authorList>
    </citation>
    <scope>NUCLEOTIDE SEQUENCE [MRNA]</scope>
    <source>
        <strain>C57BL/6J</strain>
    </source>
</reference>
<reference key="5">
    <citation type="journal article" date="2005" name="Science">
        <title>The transcriptional landscape of the mammalian genome.</title>
        <authorList>
            <person name="Carninci P."/>
            <person name="Kasukawa T."/>
            <person name="Katayama S."/>
            <person name="Gough J."/>
            <person name="Frith M.C."/>
            <person name="Maeda N."/>
            <person name="Oyama R."/>
            <person name="Ravasi T."/>
            <person name="Lenhard B."/>
            <person name="Wells C."/>
            <person name="Kodzius R."/>
            <person name="Shimokawa K."/>
            <person name="Bajic V.B."/>
            <person name="Brenner S.E."/>
            <person name="Batalov S."/>
            <person name="Forrest A.R."/>
            <person name="Zavolan M."/>
            <person name="Davis M.J."/>
            <person name="Wilming L.G."/>
            <person name="Aidinis V."/>
            <person name="Allen J.E."/>
            <person name="Ambesi-Impiombato A."/>
            <person name="Apweiler R."/>
            <person name="Aturaliya R.N."/>
            <person name="Bailey T.L."/>
            <person name="Bansal M."/>
            <person name="Baxter L."/>
            <person name="Beisel K.W."/>
            <person name="Bersano T."/>
            <person name="Bono H."/>
            <person name="Chalk A.M."/>
            <person name="Chiu K.P."/>
            <person name="Choudhary V."/>
            <person name="Christoffels A."/>
            <person name="Clutterbuck D.R."/>
            <person name="Crowe M.L."/>
            <person name="Dalla E."/>
            <person name="Dalrymple B.P."/>
            <person name="de Bono B."/>
            <person name="Della Gatta G."/>
            <person name="di Bernardo D."/>
            <person name="Down T."/>
            <person name="Engstrom P."/>
            <person name="Fagiolini M."/>
            <person name="Faulkner G."/>
            <person name="Fletcher C.F."/>
            <person name="Fukushima T."/>
            <person name="Furuno M."/>
            <person name="Futaki S."/>
            <person name="Gariboldi M."/>
            <person name="Georgii-Hemming P."/>
            <person name="Gingeras T.R."/>
            <person name="Gojobori T."/>
            <person name="Green R.E."/>
            <person name="Gustincich S."/>
            <person name="Harbers M."/>
            <person name="Hayashi Y."/>
            <person name="Hensch T.K."/>
            <person name="Hirokawa N."/>
            <person name="Hill D."/>
            <person name="Huminiecki L."/>
            <person name="Iacono M."/>
            <person name="Ikeo K."/>
            <person name="Iwama A."/>
            <person name="Ishikawa T."/>
            <person name="Jakt M."/>
            <person name="Kanapin A."/>
            <person name="Katoh M."/>
            <person name="Kawasawa Y."/>
            <person name="Kelso J."/>
            <person name="Kitamura H."/>
            <person name="Kitano H."/>
            <person name="Kollias G."/>
            <person name="Krishnan S.P."/>
            <person name="Kruger A."/>
            <person name="Kummerfeld S.K."/>
            <person name="Kurochkin I.V."/>
            <person name="Lareau L.F."/>
            <person name="Lazarevic D."/>
            <person name="Lipovich L."/>
            <person name="Liu J."/>
            <person name="Liuni S."/>
            <person name="McWilliam S."/>
            <person name="Madan Babu M."/>
            <person name="Madera M."/>
            <person name="Marchionni L."/>
            <person name="Matsuda H."/>
            <person name="Matsuzawa S."/>
            <person name="Miki H."/>
            <person name="Mignone F."/>
            <person name="Miyake S."/>
            <person name="Morris K."/>
            <person name="Mottagui-Tabar S."/>
            <person name="Mulder N."/>
            <person name="Nakano N."/>
            <person name="Nakauchi H."/>
            <person name="Ng P."/>
            <person name="Nilsson R."/>
            <person name="Nishiguchi S."/>
            <person name="Nishikawa S."/>
            <person name="Nori F."/>
            <person name="Ohara O."/>
            <person name="Okazaki Y."/>
            <person name="Orlando V."/>
            <person name="Pang K.C."/>
            <person name="Pavan W.J."/>
            <person name="Pavesi G."/>
            <person name="Pesole G."/>
            <person name="Petrovsky N."/>
            <person name="Piazza S."/>
            <person name="Reed J."/>
            <person name="Reid J.F."/>
            <person name="Ring B.Z."/>
            <person name="Ringwald M."/>
            <person name="Rost B."/>
            <person name="Ruan Y."/>
            <person name="Salzberg S.L."/>
            <person name="Sandelin A."/>
            <person name="Schneider C."/>
            <person name="Schoenbach C."/>
            <person name="Sekiguchi K."/>
            <person name="Semple C.A."/>
            <person name="Seno S."/>
            <person name="Sessa L."/>
            <person name="Sheng Y."/>
            <person name="Shibata Y."/>
            <person name="Shimada H."/>
            <person name="Shimada K."/>
            <person name="Silva D."/>
            <person name="Sinclair B."/>
            <person name="Sperling S."/>
            <person name="Stupka E."/>
            <person name="Sugiura K."/>
            <person name="Sultana R."/>
            <person name="Takenaka Y."/>
            <person name="Taki K."/>
            <person name="Tammoja K."/>
            <person name="Tan S.L."/>
            <person name="Tang S."/>
            <person name="Taylor M.S."/>
            <person name="Tegner J."/>
            <person name="Teichmann S.A."/>
            <person name="Ueda H.R."/>
            <person name="van Nimwegen E."/>
            <person name="Verardo R."/>
            <person name="Wei C.L."/>
            <person name="Yagi K."/>
            <person name="Yamanishi H."/>
            <person name="Zabarovsky E."/>
            <person name="Zhu S."/>
            <person name="Zimmer A."/>
            <person name="Hide W."/>
            <person name="Bult C."/>
            <person name="Grimmond S.M."/>
            <person name="Teasdale R.D."/>
            <person name="Liu E.T."/>
            <person name="Brusic V."/>
            <person name="Quackenbush J."/>
            <person name="Wahlestedt C."/>
            <person name="Mattick J.S."/>
            <person name="Hume D.A."/>
            <person name="Kai C."/>
            <person name="Sasaki D."/>
            <person name="Tomaru Y."/>
            <person name="Fukuda S."/>
            <person name="Kanamori-Katayama M."/>
            <person name="Suzuki M."/>
            <person name="Aoki J."/>
            <person name="Arakawa T."/>
            <person name="Iida J."/>
            <person name="Imamura K."/>
            <person name="Itoh M."/>
            <person name="Kato T."/>
            <person name="Kawaji H."/>
            <person name="Kawagashira N."/>
            <person name="Kawashima T."/>
            <person name="Kojima M."/>
            <person name="Kondo S."/>
            <person name="Konno H."/>
            <person name="Nakano K."/>
            <person name="Ninomiya N."/>
            <person name="Nishio T."/>
            <person name="Okada M."/>
            <person name="Plessy C."/>
            <person name="Shibata K."/>
            <person name="Shiraki T."/>
            <person name="Suzuki S."/>
            <person name="Tagami M."/>
            <person name="Waki K."/>
            <person name="Watahiki A."/>
            <person name="Okamura-Oho Y."/>
            <person name="Suzuki H."/>
            <person name="Kawai J."/>
            <person name="Hayashizaki Y."/>
        </authorList>
    </citation>
    <scope>NUCLEOTIDE SEQUENCE [LARGE SCALE MRNA]</scope>
    <source>
        <strain>C57BL/6J</strain>
        <tissue>Muellerian duct</tissue>
        <tissue>Testis</tissue>
    </source>
</reference>
<reference key="6">
    <citation type="journal article" date="2004" name="Genome Res.">
        <title>The status, quality, and expansion of the NIH full-length cDNA project: the Mammalian Gene Collection (MGC).</title>
        <authorList>
            <consortium name="The MGC Project Team"/>
        </authorList>
    </citation>
    <scope>NUCLEOTIDE SEQUENCE [LARGE SCALE MRNA]</scope>
    <source>
        <strain>FVB/N</strain>
        <tissue>Mammary gland</tissue>
    </source>
</reference>
<reference key="7">
    <citation type="journal article" date="2005" name="Curr. Biol.">
        <title>Wee1B is an oocyte-specific kinase involved in the control of meiotic arrest in the mouse.</title>
        <authorList>
            <person name="Han S.J."/>
            <person name="Chen R."/>
            <person name="Paronetto M.P."/>
            <person name="Conti M."/>
        </authorList>
    </citation>
    <scope>PHOSPHORYLATION AT TYR-15</scope>
</reference>
<reference key="8">
    <citation type="journal article" date="2005" name="Nat. Cell Biol.">
        <title>Cdc2-cyclin E complexes regulate the G1/S phase transition.</title>
        <authorList>
            <person name="Aleem E."/>
            <person name="Kiyokawa H."/>
            <person name="Kaldis P."/>
        </authorList>
    </citation>
    <scope>FUNCTION AT THE TRANSITION G1-S</scope>
    <scope>INTERACTION WITH CDKN1B/P27 AND CYCLIN E1</scope>
    <scope>REGULATION BY CDKN1B/P27</scope>
</reference>
<reference key="9">
    <citation type="journal article" date="2007" name="Nature">
        <title>Cdk1 is sufficient to drive the mammalian cell cycle.</title>
        <authorList>
            <person name="Santamaria D."/>
            <person name="Barriere C."/>
            <person name="Cerqueira A."/>
            <person name="Hunt S."/>
            <person name="Tardy C."/>
            <person name="Newton K."/>
            <person name="Caceres J.F."/>
            <person name="Dubus P."/>
            <person name="Malumbres M."/>
            <person name="Barbacid M."/>
        </authorList>
    </citation>
    <scope>FUNCTION IN CELL CYCLE REGULATION</scope>
    <scope>DISRUPTION PHENOTYPE</scope>
</reference>
<reference key="10">
    <citation type="journal article" date="2007" name="Proc. Natl. Acad. Sci. U.S.A.">
        <title>Large-scale phosphorylation analysis of mouse liver.</title>
        <authorList>
            <person name="Villen J."/>
            <person name="Beausoleil S.A."/>
            <person name="Gerber S.A."/>
            <person name="Gygi S.P."/>
        </authorList>
    </citation>
    <scope>IDENTIFICATION BY MASS SPECTROMETRY [LARGE SCALE ANALYSIS]</scope>
    <source>
        <tissue>Liver</tissue>
    </source>
</reference>
<reference key="11">
    <citation type="journal article" date="2008" name="Mol. Biol. Cell">
        <title>p21 Inhibits Cdk1 in the absence of Cdk2 to maintain the G1/S phase DNA damage checkpoint.</title>
        <authorList>
            <person name="Satyanarayana A."/>
            <person name="Hilton M.B."/>
            <person name="Kaldis P."/>
        </authorList>
    </citation>
    <scope>FUNCTION</scope>
    <scope>INTERACTION WITH CDKN1A/P21</scope>
    <scope>SUBCELLULAR LOCATION</scope>
    <scope>ACTIVITY REGULATION BY CDKN1A/P21</scope>
</reference>
<reference key="12">
    <citation type="journal article" date="2009" name="Mol. Cell. Proteomics">
        <title>Large scale localization of protein phosphorylation by use of electron capture dissociation mass spectrometry.</title>
        <authorList>
            <person name="Sweet S.M."/>
            <person name="Bailey C.M."/>
            <person name="Cunningham D.L."/>
            <person name="Heath J.K."/>
            <person name="Cooper H.J."/>
        </authorList>
    </citation>
    <scope>PHOSPHORYLATION [LARGE SCALE ANALYSIS] AT THR-14 AND TYR-15</scope>
    <scope>IDENTIFICATION BY MASS SPECTROMETRY [LARGE SCALE ANALYSIS]</scope>
    <source>
        <tissue>Embryonic fibroblast</tissue>
    </source>
</reference>
<reference key="13">
    <citation type="journal article" date="2010" name="Cell">
        <title>A tissue-specific atlas of mouse protein phosphorylation and expression.</title>
        <authorList>
            <person name="Huttlin E.L."/>
            <person name="Jedrychowski M.P."/>
            <person name="Elias J.E."/>
            <person name="Goswami T."/>
            <person name="Rad R."/>
            <person name="Beausoleil S.A."/>
            <person name="Villen J."/>
            <person name="Haas W."/>
            <person name="Sowa M.E."/>
            <person name="Gygi S.P."/>
        </authorList>
    </citation>
    <scope>PHOSPHORYLATION [LARGE SCALE ANALYSIS] AT THR-14 AND TYR-15</scope>
    <scope>IDENTIFICATION BY MASS SPECTROMETRY [LARGE SCALE ANALYSIS]</scope>
    <source>
        <tissue>Heart</tissue>
        <tissue>Kidney</tissue>
        <tissue>Liver</tissue>
        <tissue>Lung</tissue>
        <tissue>Spleen</tissue>
        <tissue>Testis</tissue>
    </source>
</reference>
<reference key="14">
    <citation type="journal article" date="2010" name="J. Biol. Chem.">
        <title>The protein kinase Cdelta catalytic fragment is critical for maintenance of the G2/M DNA damage checkpoint.</title>
        <authorList>
            <person name="LaGory E.L."/>
            <person name="Sitailo L.A."/>
            <person name="Denning M.F."/>
        </authorList>
    </citation>
    <scope>PHOSPHORYLATION AT TYR-15</scope>
</reference>
<reference key="15">
    <citation type="journal article" date="2011" name="Science">
        <title>Protein tyrosine kinase Wee1B is essential for metaphase II exit in mouse oocytes.</title>
        <authorList>
            <person name="Oh J.S."/>
            <person name="Susor A."/>
            <person name="Conti M."/>
        </authorList>
    </citation>
    <scope>PHOSPHORYLATION AT TYR-15</scope>
</reference>
<reference key="16">
    <citation type="journal article" date="2012" name="Mol. Cell">
        <title>Tex14, a plk1-regulated protein, is required for kinetochore-microtubule attachment and regulation of the spindle assembly checkpoint.</title>
        <authorList>
            <person name="Mondal G."/>
            <person name="Ohashi A."/>
            <person name="Yang L."/>
            <person name="Rowley M."/>
            <person name="Couch F.J."/>
        </authorList>
    </citation>
    <scope>FUNCTION IN PHOSPHORYLATION OF TEX14</scope>
</reference>
<reference key="17">
    <citation type="journal article" date="2018" name="Biochem. Biophys. Res. Commun.">
        <title>Regulation of keratin 5/14 intermediate filaments by CDK1, Aurora-B, and Rho-kinase.</title>
        <authorList>
            <person name="Inaba H."/>
            <person name="Yamakawa D."/>
            <person name="Tomono Y."/>
            <person name="Enomoto A."/>
            <person name="Mii S."/>
            <person name="Kasahara K."/>
            <person name="Goto H."/>
            <person name="Inagaki M."/>
        </authorList>
    </citation>
    <scope>FUNCTION</scope>
</reference>
<reference key="18">
    <citation type="journal article" date="2019" name="PLoS Genet.">
        <title>The PSMA8 subunit of the spermatoproteasome is essential for proper meiotic exit and mouse fertility.</title>
        <authorList>
            <person name="Gomez-H L."/>
            <person name="Felipe-Medina N."/>
            <person name="Condezo Y.B."/>
            <person name="Garcia-Valiente R."/>
            <person name="Ramos I."/>
            <person name="Suja J.A."/>
            <person name="Barbero J.L."/>
            <person name="Roig I."/>
            <person name="Sanchez-Martin M."/>
            <person name="de Rooij D.G."/>
            <person name="Llano E."/>
            <person name="Pendas A.M."/>
        </authorList>
    </citation>
    <scope>INTERACTION WITH PSMA8</scope>
</reference>
<reference key="19">
    <citation type="journal article" date="2013" name="Mol. Cell">
        <title>SIRT5-mediated lysine desuccinylation impacts diverse metabolic pathways.</title>
        <authorList>
            <person name="Park J."/>
            <person name="Chen Y."/>
            <person name="Tishkoff D.X."/>
            <person name="Peng C."/>
            <person name="Tan M."/>
            <person name="Dai L."/>
            <person name="Xie Z."/>
            <person name="Zhang Y."/>
            <person name="Zwaans B.M."/>
            <person name="Skinner M.E."/>
            <person name="Lombard D.B."/>
            <person name="Zhao Y."/>
        </authorList>
    </citation>
    <scope>ACETYLATION [LARGE SCALE ANALYSIS] AT MET-1; LYS-6 AND LYS-9</scope>
    <scope>SUCCINYLATION [LARGE SCALE ANALYSIS] AT LYS-245</scope>
    <scope>IDENTIFICATION BY MASS SPECTROMETRY [LARGE SCALE ANALYSIS]</scope>
    <source>
        <tissue>Embryonic fibroblast</tissue>
    </source>
</reference>
<reference key="20">
    <citation type="journal article" date="2022" name="Science">
        <title>Mammalian oocytes store mRNAs in a mitochondria-associated membraneless compartment.</title>
        <authorList>
            <person name="Cheng S."/>
            <person name="Altmeppen G."/>
            <person name="So C."/>
            <person name="Welp L.M."/>
            <person name="Penir S."/>
            <person name="Ruhwedel T."/>
            <person name="Menelaou K."/>
            <person name="Harasimov K."/>
            <person name="Stuetzer A."/>
            <person name="Blayney M."/>
            <person name="Elder K."/>
            <person name="Moebius W."/>
            <person name="Urlaub H."/>
            <person name="Schuh M."/>
        </authorList>
    </citation>
    <scope>FUNCTION</scope>
    <scope>CATALYTIC ACTIVITY</scope>
</reference>
<gene>
    <name type="primary">Cdk1</name>
    <name evidence="15" type="synonym">Cdc2</name>
    <name type="synonym">Cdc2a</name>
    <name type="synonym">Cdkn1</name>
</gene>
<proteinExistence type="evidence at protein level"/>
<evidence type="ECO:0000250" key="1">
    <source>
        <dbReference type="UniProtKB" id="P06493"/>
    </source>
</evidence>
<evidence type="ECO:0000250" key="2">
    <source>
        <dbReference type="UniProtKB" id="P39951"/>
    </source>
</evidence>
<evidence type="ECO:0000255" key="3">
    <source>
        <dbReference type="PROSITE-ProRule" id="PRU00159"/>
    </source>
</evidence>
<evidence type="ECO:0000255" key="4">
    <source>
        <dbReference type="PROSITE-ProRule" id="PRU10027"/>
    </source>
</evidence>
<evidence type="ECO:0000269" key="5">
    <source>
    </source>
</evidence>
<evidence type="ECO:0000269" key="6">
    <source>
    </source>
</evidence>
<evidence type="ECO:0000269" key="7">
    <source>
    </source>
</evidence>
<evidence type="ECO:0000269" key="8">
    <source>
    </source>
</evidence>
<evidence type="ECO:0000269" key="9">
    <source>
    </source>
</evidence>
<evidence type="ECO:0000269" key="10">
    <source>
    </source>
</evidence>
<evidence type="ECO:0000269" key="11">
    <source>
    </source>
</evidence>
<evidence type="ECO:0000269" key="12">
    <source>
    </source>
</evidence>
<evidence type="ECO:0000269" key="13">
    <source>
    </source>
</evidence>
<evidence type="ECO:0000269" key="14">
    <source>
    </source>
</evidence>
<evidence type="ECO:0000303" key="15">
    <source>
    </source>
</evidence>
<evidence type="ECO:0000305" key="16"/>
<evidence type="ECO:0000305" key="17">
    <source>
    </source>
</evidence>
<evidence type="ECO:0000305" key="18">
    <source>
    </source>
</evidence>
<evidence type="ECO:0000305" key="19">
    <source>
    </source>
</evidence>
<evidence type="ECO:0000305" key="20">
    <source>
    </source>
</evidence>
<evidence type="ECO:0007744" key="21">
    <source>
    </source>
</evidence>
<evidence type="ECO:0007744" key="22">
    <source>
    </source>
</evidence>
<evidence type="ECO:0007744" key="23">
    <source>
    </source>
</evidence>
<organism>
    <name type="scientific">Mus musculus</name>
    <name type="common">Mouse</name>
    <dbReference type="NCBI Taxonomy" id="10090"/>
    <lineage>
        <taxon>Eukaryota</taxon>
        <taxon>Metazoa</taxon>
        <taxon>Chordata</taxon>
        <taxon>Craniata</taxon>
        <taxon>Vertebrata</taxon>
        <taxon>Euteleostomi</taxon>
        <taxon>Mammalia</taxon>
        <taxon>Eutheria</taxon>
        <taxon>Euarchontoglires</taxon>
        <taxon>Glires</taxon>
        <taxon>Rodentia</taxon>
        <taxon>Myomorpha</taxon>
        <taxon>Muroidea</taxon>
        <taxon>Muridae</taxon>
        <taxon>Murinae</taxon>
        <taxon>Mus</taxon>
        <taxon>Mus</taxon>
    </lineage>
</organism>
<protein>
    <recommendedName>
        <fullName>Cyclin-dependent kinase 1</fullName>
        <shortName>CDK1</shortName>
        <ecNumber evidence="14">2.7.11.22</ecNumber>
        <ecNumber evidence="20">2.7.11.23</ecNumber>
    </recommendedName>
    <alternativeName>
        <fullName evidence="15">Cell division control protein 2 homolog</fullName>
    </alternativeName>
    <alternativeName>
        <fullName>Cell division protein kinase 1</fullName>
    </alternativeName>
    <alternativeName>
        <fullName>p34 protein kinase</fullName>
    </alternativeName>
</protein>
<sequence>MEDYIKIEKIGEGTYGVVYKGRHRVTGQIVAMKKIRLESEEEGVPSTAIREISLLKELRHPNIVSLQDVLMQDSRLYLIFEFLSMDLKKYLDSIPPGQFMDSSLVKSYLHQILQGIVFCHSRRVLHRDLKPQNLLIDDKGTIKLADFGLARAFGIPIRVYTHEVVTLWYRSPEVLLGSARYSTPVDIWSIGTIFAELATKKPLFHGDSEIDQLFRIFRALGTPNNEVWPEVESLQDYKNTFPKWKPGSLASHVKNLDENGLDLLSKMLVYDPAKRISGKMALKHPYFDDLDNQIKKM</sequence>
<keyword id="KW-0007">Acetylation</keyword>
<keyword id="KW-0053">Apoptosis</keyword>
<keyword id="KW-0067">ATP-binding</keyword>
<keyword id="KW-0090">Biological rhythms</keyword>
<keyword id="KW-0131">Cell cycle</keyword>
<keyword id="KW-0132">Cell division</keyword>
<keyword id="KW-0963">Cytoplasm</keyword>
<keyword id="KW-0206">Cytoskeleton</keyword>
<keyword id="KW-0903">Direct protein sequencing</keyword>
<keyword id="KW-1017">Isopeptide bond</keyword>
<keyword id="KW-0418">Kinase</keyword>
<keyword id="KW-0496">Mitochondrion</keyword>
<keyword id="KW-0498">Mitosis</keyword>
<keyword id="KW-0547">Nucleotide-binding</keyword>
<keyword id="KW-0539">Nucleus</keyword>
<keyword id="KW-0597">Phosphoprotein</keyword>
<keyword id="KW-1185">Reference proteome</keyword>
<keyword id="KW-0723">Serine/threonine-protein kinase</keyword>
<keyword id="KW-0808">Transferase</keyword>
<keyword id="KW-0832">Ubl conjugation</keyword>
<name>CDK1_MOUSE</name>
<comment type="function">
    <text evidence="1 2 5 7 8 11 12">Plays a key role in the control of the eukaryotic cell cycle by modulating the centrosome cycle as well as mitotic onset; promotes G2-M transition via association with multiple interphase cyclins (PubMed:16007079, PubMed:17700700, PubMed:17942597, PubMed:22405274). Phosphorylates PARVA/actopaxin, APC, AMPH, APC, BARD1, Bcl-xL/BCL2L1, BRCA2, CALD1, CASP8, CDC7, CDC20, CDC25A, CDC25C, CC2D1A, CENPA, CSNK2 proteins/CKII, FZR1/CDH1, CDK7, CEBPB, CHAMP1, DMD/dystrophin, EEF1 proteins/EF-1, EZH2, KIF11/EG5, EGFR, FANCG, FOS, GFAP, GOLGA2/GM130, GRASP1, UBE2A/hHR6A, HIST1H1 proteins/histone H1, HMGA1, HIVEP3/KRC, KAT5, LMNA, LMNB, LBR, MKI67, LATS1, MAP1B, MAP4, MARCKS, MCM2, MCM4, MKLP1, MLST8, MYB, NEFH, NFIC, NPC/nuclear pore complex, PITPNM1/NIR2, NPM1, NCL, NUCKS1, NPM1/numatrin, ORC1, PRKAR2A, EEF1E1/p18, EIF3F/p47, p53/TP53, NONO/p54NRB, PAPOLA, PLEC/plectin, RB1, TPPP, UL40/R2, RAB4A, RAP1GAP, RBBP8/CtIP, RCC1, RPS6KB1/S6K1, KHDRBS1/SAM68, ESPL1, SKI, BIRC5/survivin, STIP1, TEX14, beta-tubulins, MAPT/TAU, NEDD1, VIM/vimentin, TK1, FOXO1, RUNX1/AML1, SAMHD1, SIRT2, CGAS, ZAR1 and RUNX2 (PubMed:17942597, PubMed:22405274, PubMed:36264786). CDK1/CDC2-cyclin-B controls pronuclear union in interphase fertilized eggs (By similarity). Essential for early stages of embryonic development (By similarity). During G2 and early mitosis, CDC25A/B/C-mediated dephosphorylation activates CDK1/cyclin complexes which phosphorylate several substrates that trigger at least centrosome separation, Golgi dynamics, nuclear envelope breakdown and chromosome condensation (PubMed:16007079, PubMed:17700700). Once chromosomes are condensed and aligned at the metaphase plate, CDK1 activity is switched off by WEE1- and PKMYT1-mediated phosphorylation to allow sister chromatid separation, chromosome decondensation, reformation of the nuclear envelope and cytokinesis (By similarity). Phosphorylates KRT5 during prometaphase and metaphase (PubMed:29518391). Inactivated by PKR/EIF2AK2- and WEE1-mediated phosphorylation upon DNA damage to stop cell cycle and genome replication at the G2 checkpoint thus facilitating DNA repair (By similarity). Reactivated after successful DNA repair through WIP1-dependent signaling leading to CDC25A/B/C-mediated dephosphorylation and restoring cell cycle progression (By similarity). Catalyzes lamin (LMNA, LMNB1 and LMNB2) phosphorylation at the onset of mitosis, promoting nuclear envelope breakdown (By similarity). In proliferating cells, CDK1-mediated FOXO1 phosphorylation at the G2-M phase represses FOXO1 interaction with 14-3-3 proteins and thereby promotes FOXO1 nuclear accumulation and transcription factor activity, leading to cell death of postmitotic neurons (By similarity). The phosphorylation of beta-tubulins regulates microtubule dynamics during mitosis (By similarity). NEDD1 phosphorylation promotes PLK1-mediated NEDD1 phosphorylation and subsequent targeting of the gamma-tubulin ring complex (gTuRC) to the centrosome, an important step for spindle formation (By similarity). In addition, CC2D1A phosphorylation regulates CC2D1A spindle pole localization and association with SCC1/RAD21 and centriole cohesion during mitosis (By similarity). The phosphorylation of Bcl-xL/BCL2L1 after prolongated G2 arrest upon DNA damage triggers apoptosis (By similarity). In contrast, CASP8 phosphorylation during mitosis prevents its activation by proteolysis and subsequent apoptosis (By similarity). This phosphorylation occurs in cancer cell lines, as well as in primary breast tissues and lymphocytes (By similarity). EZH2 phosphorylation promotes H3K27me3 maintenance and epigenetic gene silencing (By similarity). CALD1 phosphorylation promotes Schwann cell migration during peripheral nerve regeneration (By similarity). CDK1-cyclin-B complex phosphorylates NCKAP5L and mediates its dissociation from centrosomes during mitosis (By similarity). Regulates the amplitude of the cyclic expression of the core clock gene BMAL1 by phosphorylating its transcriptional repressor NR1D1, and this phosphorylation is necessary for SCF(FBXW7)-mediated ubiquitination and proteasomal degradation of NR1D1 (By similarity). Phosphorylates EML3 at 'Thr-881' which is essential for its interaction with HAUS augmin-like complex and TUBG1 (By similarity). Phosphorylates CGAS during mitosis, leading to its inhibition, thereby preventing CGAS activation by self DNA during mitosis (By similarity). Phosphorylates SKA3 during mitosis which promotes SKA3 binding to the NDC80 complex and anchoring of the SKA complex to kinetochores, to enable stable attachment of mitotic spindle microtubules to kinetochores (By similarity).</text>
</comment>
<comment type="catalytic activity">
    <reaction evidence="14">
        <text>L-seryl-[protein] + ATP = O-phospho-L-seryl-[protein] + ADP + H(+)</text>
        <dbReference type="Rhea" id="RHEA:17989"/>
        <dbReference type="Rhea" id="RHEA-COMP:9863"/>
        <dbReference type="Rhea" id="RHEA-COMP:11604"/>
        <dbReference type="ChEBI" id="CHEBI:15378"/>
        <dbReference type="ChEBI" id="CHEBI:29999"/>
        <dbReference type="ChEBI" id="CHEBI:30616"/>
        <dbReference type="ChEBI" id="CHEBI:83421"/>
        <dbReference type="ChEBI" id="CHEBI:456216"/>
        <dbReference type="EC" id="2.7.11.22"/>
    </reaction>
</comment>
<comment type="catalytic activity">
    <reaction evidence="14">
        <text>L-threonyl-[protein] + ATP = O-phospho-L-threonyl-[protein] + ADP + H(+)</text>
        <dbReference type="Rhea" id="RHEA:46608"/>
        <dbReference type="Rhea" id="RHEA-COMP:11060"/>
        <dbReference type="Rhea" id="RHEA-COMP:11605"/>
        <dbReference type="ChEBI" id="CHEBI:15378"/>
        <dbReference type="ChEBI" id="CHEBI:30013"/>
        <dbReference type="ChEBI" id="CHEBI:30616"/>
        <dbReference type="ChEBI" id="CHEBI:61977"/>
        <dbReference type="ChEBI" id="CHEBI:456216"/>
        <dbReference type="EC" id="2.7.11.22"/>
    </reaction>
</comment>
<comment type="catalytic activity">
    <reaction evidence="20">
        <text>[DNA-directed RNA polymerase] + ATP = phospho-[DNA-directed RNA polymerase] + ADP + H(+)</text>
        <dbReference type="Rhea" id="RHEA:10216"/>
        <dbReference type="Rhea" id="RHEA-COMP:11321"/>
        <dbReference type="Rhea" id="RHEA-COMP:11322"/>
        <dbReference type="ChEBI" id="CHEBI:15378"/>
        <dbReference type="ChEBI" id="CHEBI:30616"/>
        <dbReference type="ChEBI" id="CHEBI:43176"/>
        <dbReference type="ChEBI" id="CHEBI:68546"/>
        <dbReference type="ChEBI" id="CHEBI:456216"/>
        <dbReference type="EC" id="2.7.11.23"/>
    </reaction>
</comment>
<comment type="activity regulation">
    <text evidence="1">Phosphorylation at Thr-14 or Tyr-15 inactivates the enzyme, while phosphorylation at Thr-161 activates it. Activated through a multistep process; binding to cyclin-B is required for relocation of cyclin-kinase complexes to the nucleus, activated by CAK/CDK7-mediated phosphorylation on Thr-161, and CDC25-mediated dephosphorylation of inhibitory phosphorylation on Thr-14 and Tyr-15. Activity is restricted during S-phase in an ATR-dependent manner to prevent premature entry into G2. Repressed by the CDK inhibitors CDKN1A/p21 and CDKN1B/p27 during the G1 phase and by CDKN1A/p21 at the G1-S checkpoint upon DNA damage. Transient activation by rapid and transient dephosphorylation at Tyr-15 triggered by TGFB1.</text>
</comment>
<comment type="subunit">
    <text evidence="1 5 8 13">Forms a stable but non-covalent complex with a regulatory subunit and with a cyclin. Interacts with cyclins-B (CCNB1, CCNB2 and CCNB3) to form a serine/threonine kinase holoenzyme complex also known as maturation promoting factor (MPF). The cyclin subunit imparts substrate specificity to the complex. Can also form CDK1-cylin-D and CDK1-cyclin-E complexes that phosphorylate RB1 in vitro. Binds to RB1 and other transcription factors such as FOXO1 and RUNX2. Promotes G2-M transition when in complex with a cyclin-B. Interacts with DLGAP5. Binds to the CDK inhibitors CDKN1A/p21 and CDKN1B/p27. Isoform 2 is unable to complex with cyclin-B1 and also fails to bind to CDKN1A/p21. Interacts with catalytically active CCNB1 and RALBP1 during mitosis to form an endocytotic complex during interphase. Associates with cyclins-A and B1 during S-phase in regenerating hepatocytes. Interacts with FANCC. Interacts with CEP63; this interaction recruits CDK1 to centrosomes. Interacts with CENPA (By similarity). Interacts with NR1D1 (By similarity). Interacts with proteasome subunit PSMA8; to participate in meiosis progression during spermatogenesis (PubMed:31437213).</text>
</comment>
<comment type="interaction">
    <interactant intactId="EBI-846949">
        <id>P11440</id>
    </interactant>
    <interactant intactId="EBI-846980">
        <id>P51943</id>
        <label>Ccna2</label>
    </interactant>
    <organismsDiffer>false</organismsDiffer>
    <experiments>2</experiments>
</comment>
<comment type="interaction">
    <interactant intactId="EBI-846949">
        <id>P11440</id>
    </interactant>
    <interactant intactId="EBI-643090">
        <id>Q61457</id>
        <label>Ccne1</label>
    </interactant>
    <organismsDiffer>false</organismsDiffer>
    <experiments>3</experiments>
</comment>
<comment type="interaction">
    <interactant intactId="EBI-846949">
        <id>P11440</id>
    </interactant>
    <interactant intactId="EBI-1606219">
        <id>P20263</id>
        <label>Pou5f1</label>
    </interactant>
    <organismsDiffer>false</organismsDiffer>
    <experiments>4</experiments>
</comment>
<comment type="subcellular location">
    <subcellularLocation>
        <location evidence="8">Nucleus</location>
    </subcellularLocation>
    <subcellularLocation>
        <location evidence="8">Cytoplasm</location>
    </subcellularLocation>
    <subcellularLocation>
        <location evidence="8">Mitochondrion</location>
    </subcellularLocation>
    <subcellularLocation>
        <location evidence="1">Cytoplasm</location>
        <location evidence="1">Cytoskeleton</location>
        <location evidence="1">Microtubule organizing center</location>
        <location evidence="1">Centrosome</location>
    </subcellularLocation>
    <subcellularLocation>
        <location evidence="1">Cytoplasm</location>
        <location evidence="1">Cytoskeleton</location>
        <location evidence="1">Spindle</location>
    </subcellularLocation>
    <text evidence="1">Colocalizes with SIRT2 on centrosome during prophase and on splindle fibers during metaphase of the mitotic cell cycle (By similarity). Cytoplasmic during the interphase. Reversibly translocated from cytoplasm to nucleus when phosphorylated before G2-M transition when associated with cyclin-B1. Accumulates in mitochondria in G2-arrested cells upon DNA-damage.</text>
</comment>
<comment type="induction">
    <text evidence="16">Follow a cyclic expression; during interphase, accumulates gradually following G1, S to reach a critical threshold at the end of G2, which promotes self-activation and triggers onset of mitosis. Induced transiently by TGFB1 at an early phase of TGFB1-mediated apoptosis (Probable).</text>
</comment>
<comment type="PTM">
    <text evidence="1 6 9 10">Phosphorylation at Thr-161 by CAK/CDK7 activates kinase activity. Phosphorylation at Thr-14 and Tyr-15 by PKMYT1 prevents nuclear translocation. Phosphorylation at Tyr-15 by WEE1 and WEE2 inhibits the protein kinase activity and acts as a negative regulator of entry into mitosis (G2 to M transition). Phosphorylation by PKMYT1 and WEE1 takes place during mitosis to keep CDK1-cyclin-B complexes inactive until the end of G2. By the end of G2, PKMYT1 and WEE1 are inactivated, but CDC25A and CDC25B are activated. Dephosphorylation by active CDC25A and CDC25B at Thr-14 and Tyr-15, leads to CDK1 activation at the G2-M transition. Phosphorylation at Tyr-15 by WEE2 during oogenesis is required to maintain meiotic arrest in oocytes during the germinal vesicle (GV) stage, a long period of quiescence at dictyate prophase I, leading to prevent meiotic reentry. Phosphorylation by WEE2 is also required for metaphase II exit during egg activation to ensure exit from meiosis in oocytes and promote pronuclear formation. Phosphorylated at Tyr-4 by PKR/EIF2AK2 upon genotoxic stress. This phosphorylation triggers CDK1 polyubiquitination and subsequent proteolysis, thus leading to G2 arrest (By similarity). In response to UV irradiation, phosphorylation at Tyr-15 by PRKCD activates the G2/M DNA damage checkpoint.</text>
</comment>
<comment type="PTM">
    <text evidence="1">Polyubiquitinated upon genotoxic stress.</text>
</comment>
<comment type="disruption phenotype">
    <text evidence="7">Embryonic lethality in the first cell divisions.</text>
</comment>
<comment type="similarity">
    <text evidence="16">Belongs to the protein kinase superfamily. CMGC Ser/Thr protein kinase family. CDC2/CDKX subfamily.</text>
</comment>